<evidence type="ECO:0000255" key="1">
    <source>
        <dbReference type="HAMAP-Rule" id="MF_01813"/>
    </source>
</evidence>
<comment type="function">
    <text evidence="1">Methyltransferase required for the conversion of demethylmenaquinol (DMKH2) to menaquinol (MKH2) and the conversion of 2-polyprenyl-6-methoxy-1,4-benzoquinol (DDMQH2) to 2-polyprenyl-3-methyl-6-methoxy-1,4-benzoquinol (DMQH2).</text>
</comment>
<comment type="catalytic activity">
    <reaction evidence="1">
        <text>a 2-demethylmenaquinol + S-adenosyl-L-methionine = a menaquinol + S-adenosyl-L-homocysteine + H(+)</text>
        <dbReference type="Rhea" id="RHEA:42640"/>
        <dbReference type="Rhea" id="RHEA-COMP:9539"/>
        <dbReference type="Rhea" id="RHEA-COMP:9563"/>
        <dbReference type="ChEBI" id="CHEBI:15378"/>
        <dbReference type="ChEBI" id="CHEBI:18151"/>
        <dbReference type="ChEBI" id="CHEBI:55437"/>
        <dbReference type="ChEBI" id="CHEBI:57856"/>
        <dbReference type="ChEBI" id="CHEBI:59789"/>
        <dbReference type="EC" id="2.1.1.163"/>
    </reaction>
</comment>
<comment type="catalytic activity">
    <reaction evidence="1">
        <text>a 2-methoxy-6-(all-trans-polyprenyl)benzene-1,4-diol + S-adenosyl-L-methionine = a 5-methoxy-2-methyl-3-(all-trans-polyprenyl)benzene-1,4-diol + S-adenosyl-L-homocysteine + H(+)</text>
        <dbReference type="Rhea" id="RHEA:28286"/>
        <dbReference type="Rhea" id="RHEA-COMP:10858"/>
        <dbReference type="Rhea" id="RHEA-COMP:10859"/>
        <dbReference type="ChEBI" id="CHEBI:15378"/>
        <dbReference type="ChEBI" id="CHEBI:57856"/>
        <dbReference type="ChEBI" id="CHEBI:59789"/>
        <dbReference type="ChEBI" id="CHEBI:84166"/>
        <dbReference type="ChEBI" id="CHEBI:84167"/>
        <dbReference type="EC" id="2.1.1.201"/>
    </reaction>
</comment>
<comment type="pathway">
    <text evidence="1">Quinol/quinone metabolism; menaquinone biosynthesis; menaquinol from 1,4-dihydroxy-2-naphthoate: step 2/2.</text>
</comment>
<comment type="pathway">
    <text evidence="1">Cofactor biosynthesis; ubiquinone biosynthesis.</text>
</comment>
<comment type="similarity">
    <text evidence="1">Belongs to the class I-like SAM-binding methyltransferase superfamily. MenG/UbiE family.</text>
</comment>
<accession>Q5PKP4</accession>
<sequence length="251" mass="28136">MVEDSQETTHFGFQTVAKEQKADMVAHVFHSVASKYDVMNDLMSFGIHRLWKRFTIDCSGVRRGQTVLDLAGGTGDLTAKFSRMVGETGKVILADINDSMLKMGREKLRNIGVIGNVEYVQANAEALPFPDNTFDCITISFGLRNVTEKEKALRSMFRVLKPGGRLLVLEFSKPIIEPLSKAYDAYSFHILPRIGSMVANDADSYRYLAESIRMHPDQDTLKAMMQDAGFESVDYYNLTAGVVALHRGYKF</sequence>
<reference key="1">
    <citation type="journal article" date="2004" name="Nat. Genet.">
        <title>Comparison of genome degradation in Paratyphi A and Typhi, human-restricted serovars of Salmonella enterica that cause typhoid.</title>
        <authorList>
            <person name="McClelland M."/>
            <person name="Sanderson K.E."/>
            <person name="Clifton S.W."/>
            <person name="Latreille P."/>
            <person name="Porwollik S."/>
            <person name="Sabo A."/>
            <person name="Meyer R."/>
            <person name="Bieri T."/>
            <person name="Ozersky P."/>
            <person name="McLellan M."/>
            <person name="Harkins C.R."/>
            <person name="Wang C."/>
            <person name="Nguyen C."/>
            <person name="Berghoff A."/>
            <person name="Elliott G."/>
            <person name="Kohlberg S."/>
            <person name="Strong C."/>
            <person name="Du F."/>
            <person name="Carter J."/>
            <person name="Kremizki C."/>
            <person name="Layman D."/>
            <person name="Leonard S."/>
            <person name="Sun H."/>
            <person name="Fulton L."/>
            <person name="Nash W."/>
            <person name="Miner T."/>
            <person name="Minx P."/>
            <person name="Delehaunty K."/>
            <person name="Fronick C."/>
            <person name="Magrini V."/>
            <person name="Nhan M."/>
            <person name="Warren W."/>
            <person name="Florea L."/>
            <person name="Spieth J."/>
            <person name="Wilson R.K."/>
        </authorList>
    </citation>
    <scope>NUCLEOTIDE SEQUENCE [LARGE SCALE GENOMIC DNA]</scope>
    <source>
        <strain>ATCC 9150 / SARB42</strain>
    </source>
</reference>
<name>UBIE_SALPA</name>
<gene>
    <name evidence="1" type="primary">ubiE</name>
    <name type="ordered locus">SPA3811</name>
</gene>
<protein>
    <recommendedName>
        <fullName evidence="1">Ubiquinone/menaquinone biosynthesis C-methyltransferase UbiE</fullName>
        <ecNumber evidence="1">2.1.1.163</ecNumber>
        <ecNumber evidence="1">2.1.1.201</ecNumber>
    </recommendedName>
    <alternativeName>
        <fullName evidence="1">2-methoxy-6-polyprenyl-1,4-benzoquinol methylase</fullName>
    </alternativeName>
    <alternativeName>
        <fullName evidence="1">Demethylmenaquinone methyltransferase</fullName>
    </alternativeName>
</protein>
<dbReference type="EC" id="2.1.1.163" evidence="1"/>
<dbReference type="EC" id="2.1.1.201" evidence="1"/>
<dbReference type="EMBL" id="CP000026">
    <property type="protein sequence ID" value="AAV79587.1"/>
    <property type="molecule type" value="Genomic_DNA"/>
</dbReference>
<dbReference type="RefSeq" id="WP_000229009.1">
    <property type="nucleotide sequence ID" value="NC_006511.1"/>
</dbReference>
<dbReference type="SMR" id="Q5PKP4"/>
<dbReference type="KEGG" id="spt:SPA3811"/>
<dbReference type="HOGENOM" id="CLU_037990_0_0_6"/>
<dbReference type="UniPathway" id="UPA00079">
    <property type="reaction ID" value="UER00169"/>
</dbReference>
<dbReference type="UniPathway" id="UPA00232"/>
<dbReference type="Proteomes" id="UP000008185">
    <property type="component" value="Chromosome"/>
</dbReference>
<dbReference type="GO" id="GO:0008425">
    <property type="term" value="F:2-methoxy-6-polyprenyl-1,4-benzoquinol methyltransferase activity"/>
    <property type="evidence" value="ECO:0007669"/>
    <property type="project" value="UniProtKB-UniRule"/>
</dbReference>
<dbReference type="GO" id="GO:0043770">
    <property type="term" value="F:demethylmenaquinone methyltransferase activity"/>
    <property type="evidence" value="ECO:0007669"/>
    <property type="project" value="UniProtKB-UniRule"/>
</dbReference>
<dbReference type="GO" id="GO:0009060">
    <property type="term" value="P:aerobic respiration"/>
    <property type="evidence" value="ECO:0007669"/>
    <property type="project" value="UniProtKB-UniRule"/>
</dbReference>
<dbReference type="GO" id="GO:0009234">
    <property type="term" value="P:menaquinone biosynthetic process"/>
    <property type="evidence" value="ECO:0007669"/>
    <property type="project" value="UniProtKB-UniRule"/>
</dbReference>
<dbReference type="GO" id="GO:0032259">
    <property type="term" value="P:methylation"/>
    <property type="evidence" value="ECO:0007669"/>
    <property type="project" value="UniProtKB-KW"/>
</dbReference>
<dbReference type="CDD" id="cd02440">
    <property type="entry name" value="AdoMet_MTases"/>
    <property type="match status" value="1"/>
</dbReference>
<dbReference type="FunFam" id="3.40.50.150:FF:000014">
    <property type="entry name" value="Ubiquinone/menaquinone biosynthesis C-methyltransferase UbiE"/>
    <property type="match status" value="1"/>
</dbReference>
<dbReference type="Gene3D" id="3.40.50.150">
    <property type="entry name" value="Vaccinia Virus protein VP39"/>
    <property type="match status" value="1"/>
</dbReference>
<dbReference type="HAMAP" id="MF_01813">
    <property type="entry name" value="MenG_UbiE_methyltr"/>
    <property type="match status" value="1"/>
</dbReference>
<dbReference type="InterPro" id="IPR029063">
    <property type="entry name" value="SAM-dependent_MTases_sf"/>
</dbReference>
<dbReference type="InterPro" id="IPR004033">
    <property type="entry name" value="UbiE/COQ5_MeTrFase"/>
</dbReference>
<dbReference type="InterPro" id="IPR023576">
    <property type="entry name" value="UbiE/COQ5_MeTrFase_CS"/>
</dbReference>
<dbReference type="NCBIfam" id="TIGR01934">
    <property type="entry name" value="MenG_MenH_UbiE"/>
    <property type="match status" value="1"/>
</dbReference>
<dbReference type="NCBIfam" id="NF001240">
    <property type="entry name" value="PRK00216.1-1"/>
    <property type="match status" value="1"/>
</dbReference>
<dbReference type="NCBIfam" id="NF001242">
    <property type="entry name" value="PRK00216.1-3"/>
    <property type="match status" value="1"/>
</dbReference>
<dbReference type="NCBIfam" id="NF001244">
    <property type="entry name" value="PRK00216.1-5"/>
    <property type="match status" value="1"/>
</dbReference>
<dbReference type="PANTHER" id="PTHR43591:SF24">
    <property type="entry name" value="2-METHOXY-6-POLYPRENYL-1,4-BENZOQUINOL METHYLASE, MITOCHONDRIAL"/>
    <property type="match status" value="1"/>
</dbReference>
<dbReference type="PANTHER" id="PTHR43591">
    <property type="entry name" value="METHYLTRANSFERASE"/>
    <property type="match status" value="1"/>
</dbReference>
<dbReference type="Pfam" id="PF01209">
    <property type="entry name" value="Ubie_methyltran"/>
    <property type="match status" value="1"/>
</dbReference>
<dbReference type="SUPFAM" id="SSF53335">
    <property type="entry name" value="S-adenosyl-L-methionine-dependent methyltransferases"/>
    <property type="match status" value="1"/>
</dbReference>
<dbReference type="PROSITE" id="PS51608">
    <property type="entry name" value="SAM_MT_UBIE"/>
    <property type="match status" value="1"/>
</dbReference>
<dbReference type="PROSITE" id="PS01183">
    <property type="entry name" value="UBIE_1"/>
    <property type="match status" value="1"/>
</dbReference>
<dbReference type="PROSITE" id="PS01184">
    <property type="entry name" value="UBIE_2"/>
    <property type="match status" value="1"/>
</dbReference>
<feature type="chain" id="PRO_1000056291" description="Ubiquinone/menaquinone biosynthesis C-methyltransferase UbiE">
    <location>
        <begin position="1"/>
        <end position="251"/>
    </location>
</feature>
<feature type="binding site" evidence="1">
    <location>
        <position position="74"/>
    </location>
    <ligand>
        <name>S-adenosyl-L-methionine</name>
        <dbReference type="ChEBI" id="CHEBI:59789"/>
    </ligand>
</feature>
<feature type="binding site" evidence="1">
    <location>
        <position position="95"/>
    </location>
    <ligand>
        <name>S-adenosyl-L-methionine</name>
        <dbReference type="ChEBI" id="CHEBI:59789"/>
    </ligand>
</feature>
<feature type="binding site" evidence="1">
    <location>
        <begin position="123"/>
        <end position="124"/>
    </location>
    <ligand>
        <name>S-adenosyl-L-methionine</name>
        <dbReference type="ChEBI" id="CHEBI:59789"/>
    </ligand>
</feature>
<feature type="binding site" evidence="1">
    <location>
        <position position="140"/>
    </location>
    <ligand>
        <name>S-adenosyl-L-methionine</name>
        <dbReference type="ChEBI" id="CHEBI:59789"/>
    </ligand>
</feature>
<keyword id="KW-0474">Menaquinone biosynthesis</keyword>
<keyword id="KW-0489">Methyltransferase</keyword>
<keyword id="KW-0949">S-adenosyl-L-methionine</keyword>
<keyword id="KW-0808">Transferase</keyword>
<keyword id="KW-0831">Ubiquinone biosynthesis</keyword>
<proteinExistence type="inferred from homology"/>
<organism>
    <name type="scientific">Salmonella paratyphi A (strain ATCC 9150 / SARB42)</name>
    <dbReference type="NCBI Taxonomy" id="295319"/>
    <lineage>
        <taxon>Bacteria</taxon>
        <taxon>Pseudomonadati</taxon>
        <taxon>Pseudomonadota</taxon>
        <taxon>Gammaproteobacteria</taxon>
        <taxon>Enterobacterales</taxon>
        <taxon>Enterobacteriaceae</taxon>
        <taxon>Salmonella</taxon>
    </lineage>
</organism>